<reference key="1">
    <citation type="journal article" date="2010" name="Genome Biol.">
        <title>Structure and dynamics of the pan-genome of Streptococcus pneumoniae and closely related species.</title>
        <authorList>
            <person name="Donati C."/>
            <person name="Hiller N.L."/>
            <person name="Tettelin H."/>
            <person name="Muzzi A."/>
            <person name="Croucher N.J."/>
            <person name="Angiuoli S.V."/>
            <person name="Oggioni M."/>
            <person name="Dunning Hotopp J.C."/>
            <person name="Hu F.Z."/>
            <person name="Riley D.R."/>
            <person name="Covacci A."/>
            <person name="Mitchell T.J."/>
            <person name="Bentley S.D."/>
            <person name="Kilian M."/>
            <person name="Ehrlich G.D."/>
            <person name="Rappuoli R."/>
            <person name="Moxon E.R."/>
            <person name="Masignani V."/>
        </authorList>
    </citation>
    <scope>NUCLEOTIDE SEQUENCE [LARGE SCALE GENOMIC DNA]</scope>
    <source>
        <strain>70585</strain>
    </source>
</reference>
<gene>
    <name evidence="1" type="primary">leuS</name>
    <name type="ordered locus">SP70585_0316</name>
</gene>
<accession>C1CB31</accession>
<protein>
    <recommendedName>
        <fullName evidence="1">Leucine--tRNA ligase</fullName>
        <ecNumber evidence="1">6.1.1.4</ecNumber>
    </recommendedName>
    <alternativeName>
        <fullName evidence="1">Leucyl-tRNA synthetase</fullName>
        <shortName evidence="1">LeuRS</shortName>
    </alternativeName>
</protein>
<sequence>MSFYNHKEIEPKWQGYWAEHHTFKTGTDASKPKFYALDMFPYPSGAGLHVGHPEGYTATDILSRYKRAQGYNVLHPMGWDAFGLPAEQYAMDTGNDPAEFTAENIANFKRQINALGFSYDWDREVNTTDPNYYKWTQWIFTKLYEKGLAYEAEVPVNWVEELGTAIANEEVLPDGTSERGGYPVVRKPMRQWMLKITAYAERLLNDLDELDWSESIKDMQRNWIGKSTGANVTFKVKGTDKEFTVFTTRPDTLFGATFTVLAPEHELVDAITSTEQAEAVADYKHQASLKSDLARTDLAKEKTGVWTGAYAINPVNGKEIPIWIADYVLASYGTGAVMAVPAHDQRDWEFAKQFDLPIVEVLEGGNVEEAAYTEDGLHVNSDFLDGLNKEDAIAKIVACLEEKGCGQEKVTYRLRDWLFSRQRYWGEPIPIIHWEDGTSTAVPESELPLVLPVTKDIRPSGTGESPLANLTDWLEVTREDGVKGRRETNTMPQWAGSSWYYLRYIDPHNTEKLADEDLLKQWLPVDIYVGGAEHAVLHLLYARFWHKFLYDLGVVPTKEPFQKLFNQGMILGTSYRDHRGALVATDKVEKRDGSFFHVETGEELEQAPAKMSKSLKNVVNPDDVVEQYGADTLRVYEMFMGPLDASIAWSEEGLEGSRKFLDRVYRLIRSKEIVAENNGALDKVYNETVKAVTEQIDSLKFNTAIAQLMVFVNAANKEDKLYVDYAKGFIQLIAPFAPHLAEELWQTVAATGESISYVTWPTWDESKLVEDEIEIVVQIKGKVRAKLMVAKDLSREELQEIALADEKVKAEIDGKEIVKVISVPNKLVNIVVK</sequence>
<keyword id="KW-0030">Aminoacyl-tRNA synthetase</keyword>
<keyword id="KW-0067">ATP-binding</keyword>
<keyword id="KW-0963">Cytoplasm</keyword>
<keyword id="KW-0436">Ligase</keyword>
<keyword id="KW-0547">Nucleotide-binding</keyword>
<keyword id="KW-0648">Protein biosynthesis</keyword>
<organism>
    <name type="scientific">Streptococcus pneumoniae (strain 70585)</name>
    <dbReference type="NCBI Taxonomy" id="488221"/>
    <lineage>
        <taxon>Bacteria</taxon>
        <taxon>Bacillati</taxon>
        <taxon>Bacillota</taxon>
        <taxon>Bacilli</taxon>
        <taxon>Lactobacillales</taxon>
        <taxon>Streptococcaceae</taxon>
        <taxon>Streptococcus</taxon>
    </lineage>
</organism>
<proteinExistence type="inferred from homology"/>
<feature type="chain" id="PRO_1000199225" description="Leucine--tRNA ligase">
    <location>
        <begin position="1"/>
        <end position="833"/>
    </location>
</feature>
<feature type="short sequence motif" description="'HIGH' region">
    <location>
        <begin position="41"/>
        <end position="52"/>
    </location>
</feature>
<feature type="short sequence motif" description="'KMSKS' region">
    <location>
        <begin position="610"/>
        <end position="614"/>
    </location>
</feature>
<feature type="binding site" evidence="1">
    <location>
        <position position="613"/>
    </location>
    <ligand>
        <name>ATP</name>
        <dbReference type="ChEBI" id="CHEBI:30616"/>
    </ligand>
</feature>
<name>SYL_STRP7</name>
<dbReference type="EC" id="6.1.1.4" evidence="1"/>
<dbReference type="EMBL" id="CP000918">
    <property type="protein sequence ID" value="ACO17927.1"/>
    <property type="molecule type" value="Genomic_DNA"/>
</dbReference>
<dbReference type="RefSeq" id="WP_000011771.1">
    <property type="nucleotide sequence ID" value="NC_012468.1"/>
</dbReference>
<dbReference type="SMR" id="C1CB31"/>
<dbReference type="KEGG" id="snm:SP70585_0316"/>
<dbReference type="HOGENOM" id="CLU_004427_0_0_9"/>
<dbReference type="Proteomes" id="UP000002211">
    <property type="component" value="Chromosome"/>
</dbReference>
<dbReference type="GO" id="GO:0005829">
    <property type="term" value="C:cytosol"/>
    <property type="evidence" value="ECO:0007669"/>
    <property type="project" value="TreeGrafter"/>
</dbReference>
<dbReference type="GO" id="GO:0002161">
    <property type="term" value="F:aminoacyl-tRNA deacylase activity"/>
    <property type="evidence" value="ECO:0007669"/>
    <property type="project" value="InterPro"/>
</dbReference>
<dbReference type="GO" id="GO:0005524">
    <property type="term" value="F:ATP binding"/>
    <property type="evidence" value="ECO:0007669"/>
    <property type="project" value="UniProtKB-UniRule"/>
</dbReference>
<dbReference type="GO" id="GO:0004823">
    <property type="term" value="F:leucine-tRNA ligase activity"/>
    <property type="evidence" value="ECO:0007669"/>
    <property type="project" value="UniProtKB-UniRule"/>
</dbReference>
<dbReference type="GO" id="GO:0006429">
    <property type="term" value="P:leucyl-tRNA aminoacylation"/>
    <property type="evidence" value="ECO:0007669"/>
    <property type="project" value="UniProtKB-UniRule"/>
</dbReference>
<dbReference type="CDD" id="cd07958">
    <property type="entry name" value="Anticodon_Ia_Leu_BEm"/>
    <property type="match status" value="1"/>
</dbReference>
<dbReference type="CDD" id="cd00812">
    <property type="entry name" value="LeuRS_core"/>
    <property type="match status" value="1"/>
</dbReference>
<dbReference type="FunFam" id="1.10.730.10:FF:000012">
    <property type="entry name" value="Leucine--tRNA ligase"/>
    <property type="match status" value="1"/>
</dbReference>
<dbReference type="FunFam" id="3.40.50.620:FF:000056">
    <property type="entry name" value="Leucine--tRNA ligase"/>
    <property type="match status" value="1"/>
</dbReference>
<dbReference type="FunFam" id="3.40.50.620:FF:000077">
    <property type="entry name" value="Leucine--tRNA ligase"/>
    <property type="match status" value="1"/>
</dbReference>
<dbReference type="FunFam" id="1.10.730.10:FF:000011">
    <property type="entry name" value="Leucine--tRNA ligase chloroplastic/mitochondrial"/>
    <property type="match status" value="1"/>
</dbReference>
<dbReference type="Gene3D" id="3.40.50.620">
    <property type="entry name" value="HUPs"/>
    <property type="match status" value="2"/>
</dbReference>
<dbReference type="Gene3D" id="1.10.730.10">
    <property type="entry name" value="Isoleucyl-tRNA Synthetase, Domain 1"/>
    <property type="match status" value="2"/>
</dbReference>
<dbReference type="HAMAP" id="MF_00049_B">
    <property type="entry name" value="Leu_tRNA_synth_B"/>
    <property type="match status" value="1"/>
</dbReference>
<dbReference type="InterPro" id="IPR001412">
    <property type="entry name" value="aa-tRNA-synth_I_CS"/>
</dbReference>
<dbReference type="InterPro" id="IPR002300">
    <property type="entry name" value="aa-tRNA-synth_Ia"/>
</dbReference>
<dbReference type="InterPro" id="IPR002302">
    <property type="entry name" value="Leu-tRNA-ligase"/>
</dbReference>
<dbReference type="InterPro" id="IPR025709">
    <property type="entry name" value="Leu_tRNA-synth_edit"/>
</dbReference>
<dbReference type="InterPro" id="IPR013155">
    <property type="entry name" value="M/V/L/I-tRNA-synth_anticd-bd"/>
</dbReference>
<dbReference type="InterPro" id="IPR015413">
    <property type="entry name" value="Methionyl/Leucyl_tRNA_Synth"/>
</dbReference>
<dbReference type="InterPro" id="IPR014729">
    <property type="entry name" value="Rossmann-like_a/b/a_fold"/>
</dbReference>
<dbReference type="InterPro" id="IPR009080">
    <property type="entry name" value="tRNAsynth_Ia_anticodon-bd"/>
</dbReference>
<dbReference type="InterPro" id="IPR009008">
    <property type="entry name" value="Val/Leu/Ile-tRNA-synth_edit"/>
</dbReference>
<dbReference type="NCBIfam" id="TIGR00396">
    <property type="entry name" value="leuS_bact"/>
    <property type="match status" value="1"/>
</dbReference>
<dbReference type="PANTHER" id="PTHR43740:SF2">
    <property type="entry name" value="LEUCINE--TRNA LIGASE, MITOCHONDRIAL"/>
    <property type="match status" value="1"/>
</dbReference>
<dbReference type="PANTHER" id="PTHR43740">
    <property type="entry name" value="LEUCYL-TRNA SYNTHETASE"/>
    <property type="match status" value="1"/>
</dbReference>
<dbReference type="Pfam" id="PF08264">
    <property type="entry name" value="Anticodon_1"/>
    <property type="match status" value="1"/>
</dbReference>
<dbReference type="Pfam" id="PF00133">
    <property type="entry name" value="tRNA-synt_1"/>
    <property type="match status" value="2"/>
</dbReference>
<dbReference type="Pfam" id="PF13603">
    <property type="entry name" value="tRNA-synt_1_2"/>
    <property type="match status" value="1"/>
</dbReference>
<dbReference type="Pfam" id="PF09334">
    <property type="entry name" value="tRNA-synt_1g"/>
    <property type="match status" value="1"/>
</dbReference>
<dbReference type="PRINTS" id="PR00985">
    <property type="entry name" value="TRNASYNTHLEU"/>
</dbReference>
<dbReference type="SUPFAM" id="SSF47323">
    <property type="entry name" value="Anticodon-binding domain of a subclass of class I aminoacyl-tRNA synthetases"/>
    <property type="match status" value="1"/>
</dbReference>
<dbReference type="SUPFAM" id="SSF52374">
    <property type="entry name" value="Nucleotidylyl transferase"/>
    <property type="match status" value="1"/>
</dbReference>
<dbReference type="SUPFAM" id="SSF50677">
    <property type="entry name" value="ValRS/IleRS/LeuRS editing domain"/>
    <property type="match status" value="1"/>
</dbReference>
<dbReference type="PROSITE" id="PS00178">
    <property type="entry name" value="AA_TRNA_LIGASE_I"/>
    <property type="match status" value="1"/>
</dbReference>
<evidence type="ECO:0000255" key="1">
    <source>
        <dbReference type="HAMAP-Rule" id="MF_00049"/>
    </source>
</evidence>
<comment type="catalytic activity">
    <reaction evidence="1">
        <text>tRNA(Leu) + L-leucine + ATP = L-leucyl-tRNA(Leu) + AMP + diphosphate</text>
        <dbReference type="Rhea" id="RHEA:11688"/>
        <dbReference type="Rhea" id="RHEA-COMP:9613"/>
        <dbReference type="Rhea" id="RHEA-COMP:9622"/>
        <dbReference type="ChEBI" id="CHEBI:30616"/>
        <dbReference type="ChEBI" id="CHEBI:33019"/>
        <dbReference type="ChEBI" id="CHEBI:57427"/>
        <dbReference type="ChEBI" id="CHEBI:78442"/>
        <dbReference type="ChEBI" id="CHEBI:78494"/>
        <dbReference type="ChEBI" id="CHEBI:456215"/>
        <dbReference type="EC" id="6.1.1.4"/>
    </reaction>
</comment>
<comment type="subcellular location">
    <subcellularLocation>
        <location evidence="1">Cytoplasm</location>
    </subcellularLocation>
</comment>
<comment type="similarity">
    <text evidence="1">Belongs to the class-I aminoacyl-tRNA synthetase family.</text>
</comment>